<comment type="function">
    <text evidence="1">Could be a nuclease involved in processing of the 5'-end of pre-16S rRNA.</text>
</comment>
<comment type="subcellular location">
    <subcellularLocation>
        <location evidence="1">Cytoplasm</location>
    </subcellularLocation>
</comment>
<comment type="similarity">
    <text evidence="1">Belongs to the YqgF nuclease family.</text>
</comment>
<evidence type="ECO:0000255" key="1">
    <source>
        <dbReference type="HAMAP-Rule" id="MF_00651"/>
    </source>
</evidence>
<sequence>MAVININEVITHLLPGQTIAGLDLGKKTIGIAVSDRGLTFSNPRSVLQRKKLTVDARTLIQIFDRENVGVVIIGLPLNMNGSSGPRAQATRTFVNNMEAYTEIPFVFWDERLSTIAAERSLLEMDVSRAKRATRIDSAAAAFILQGALNRIQNLHYMEG</sequence>
<protein>
    <recommendedName>
        <fullName evidence="1">Putative pre-16S rRNA nuclease</fullName>
        <ecNumber evidence="1">3.1.-.-</ecNumber>
    </recommendedName>
</protein>
<keyword id="KW-0963">Cytoplasm</keyword>
<keyword id="KW-0378">Hydrolase</keyword>
<keyword id="KW-0540">Nuclease</keyword>
<keyword id="KW-0690">Ribosome biogenesis</keyword>
<gene>
    <name type="ordered locus">BQ06360</name>
</gene>
<name>YQGF_BARQU</name>
<feature type="chain" id="PRO_0000172026" description="Putative pre-16S rRNA nuclease">
    <location>
        <begin position="1"/>
        <end position="159"/>
    </location>
</feature>
<reference key="1">
    <citation type="journal article" date="2004" name="Proc. Natl. Acad. Sci. U.S.A.">
        <title>The louse-borne human pathogen Bartonella quintana is a genomic derivative of the zoonotic agent Bartonella henselae.</title>
        <authorList>
            <person name="Alsmark U.C.M."/>
            <person name="Frank A.C."/>
            <person name="Karlberg E.O."/>
            <person name="Legault B.-A."/>
            <person name="Ardell D.H."/>
            <person name="Canbaeck B."/>
            <person name="Eriksson A.-S."/>
            <person name="Naeslund A.K."/>
            <person name="Handley S.A."/>
            <person name="Huvet M."/>
            <person name="La Scola B."/>
            <person name="Holmberg M."/>
            <person name="Andersson S.G.E."/>
        </authorList>
    </citation>
    <scope>NUCLEOTIDE SEQUENCE [LARGE SCALE GENOMIC DNA]</scope>
    <source>
        <strain>Toulouse</strain>
    </source>
</reference>
<organism>
    <name type="scientific">Bartonella quintana (strain Toulouse)</name>
    <name type="common">Rochalimaea quintana</name>
    <dbReference type="NCBI Taxonomy" id="283165"/>
    <lineage>
        <taxon>Bacteria</taxon>
        <taxon>Pseudomonadati</taxon>
        <taxon>Pseudomonadota</taxon>
        <taxon>Alphaproteobacteria</taxon>
        <taxon>Hyphomicrobiales</taxon>
        <taxon>Bartonellaceae</taxon>
        <taxon>Bartonella</taxon>
    </lineage>
</organism>
<proteinExistence type="inferred from homology"/>
<accession>Q6FZS7</accession>
<dbReference type="EC" id="3.1.-.-" evidence="1"/>
<dbReference type="EMBL" id="BX897700">
    <property type="protein sequence ID" value="CAF26127.1"/>
    <property type="molecule type" value="Genomic_DNA"/>
</dbReference>
<dbReference type="RefSeq" id="WP_011179390.1">
    <property type="nucleotide sequence ID" value="NC_005955.1"/>
</dbReference>
<dbReference type="SMR" id="Q6FZS7"/>
<dbReference type="KEGG" id="bqu:BQ06360"/>
<dbReference type="eggNOG" id="COG0816">
    <property type="taxonomic scope" value="Bacteria"/>
</dbReference>
<dbReference type="HOGENOM" id="CLU_098240_1_1_5"/>
<dbReference type="OrthoDB" id="9796140at2"/>
<dbReference type="Proteomes" id="UP000000597">
    <property type="component" value="Chromosome"/>
</dbReference>
<dbReference type="GO" id="GO:0005829">
    <property type="term" value="C:cytosol"/>
    <property type="evidence" value="ECO:0007669"/>
    <property type="project" value="TreeGrafter"/>
</dbReference>
<dbReference type="GO" id="GO:0004518">
    <property type="term" value="F:nuclease activity"/>
    <property type="evidence" value="ECO:0007669"/>
    <property type="project" value="UniProtKB-KW"/>
</dbReference>
<dbReference type="GO" id="GO:0000967">
    <property type="term" value="P:rRNA 5'-end processing"/>
    <property type="evidence" value="ECO:0007669"/>
    <property type="project" value="UniProtKB-UniRule"/>
</dbReference>
<dbReference type="CDD" id="cd16964">
    <property type="entry name" value="YqgF"/>
    <property type="match status" value="1"/>
</dbReference>
<dbReference type="Gene3D" id="3.30.420.140">
    <property type="entry name" value="YqgF/RNase H-like domain"/>
    <property type="match status" value="1"/>
</dbReference>
<dbReference type="HAMAP" id="MF_00651">
    <property type="entry name" value="Nuclease_YqgF"/>
    <property type="match status" value="1"/>
</dbReference>
<dbReference type="InterPro" id="IPR012337">
    <property type="entry name" value="RNaseH-like_sf"/>
</dbReference>
<dbReference type="InterPro" id="IPR005227">
    <property type="entry name" value="YqgF"/>
</dbReference>
<dbReference type="InterPro" id="IPR006641">
    <property type="entry name" value="YqgF/RNaseH-like_dom"/>
</dbReference>
<dbReference type="InterPro" id="IPR037027">
    <property type="entry name" value="YqgF/RNaseH-like_dom_sf"/>
</dbReference>
<dbReference type="NCBIfam" id="TIGR00250">
    <property type="entry name" value="RNAse_H_YqgF"/>
    <property type="match status" value="1"/>
</dbReference>
<dbReference type="PANTHER" id="PTHR33317">
    <property type="entry name" value="POLYNUCLEOTIDYL TRANSFERASE, RIBONUCLEASE H-LIKE SUPERFAMILY PROTEIN"/>
    <property type="match status" value="1"/>
</dbReference>
<dbReference type="PANTHER" id="PTHR33317:SF4">
    <property type="entry name" value="POLYNUCLEOTIDYL TRANSFERASE, RIBONUCLEASE H-LIKE SUPERFAMILY PROTEIN"/>
    <property type="match status" value="1"/>
</dbReference>
<dbReference type="Pfam" id="PF03652">
    <property type="entry name" value="RuvX"/>
    <property type="match status" value="1"/>
</dbReference>
<dbReference type="SMART" id="SM00732">
    <property type="entry name" value="YqgFc"/>
    <property type="match status" value="1"/>
</dbReference>
<dbReference type="SUPFAM" id="SSF53098">
    <property type="entry name" value="Ribonuclease H-like"/>
    <property type="match status" value="1"/>
</dbReference>